<name>SGM_MICZI</name>
<accession>Q7M0R2</accession>
<sequence length="274" mass="30669">MTAPAADDRIDEIERAITKSRRYQTVAPATVRRLARAALVAARGDVPDAVKRTKRGLHEIYGAFLPPSPPNYAALLRHLDSAVDAGDDEAVRAALLRAMSVHISTRERLPHLDEFYRELFRHLPRPNTLRDLACGLNPLAAPWMGLPAETVYIASDIDARLVGFVDEALTRLNVPHRTNVADLLEDRLDEPADVTLLLKTLPCLETQQRGSGWEVIDIVNSPNIVVTFPTKSLGQRSKGMFQNYSQSFESQARERSCRIQRLEIGNELIYVIQK</sequence>
<protein>
    <recommendedName>
        <fullName>16S rRNA (guanine(1405)-N(7))-methyltransferase</fullName>
        <ecNumber>2.1.1.179</ecNumber>
    </recommendedName>
    <alternativeName>
        <fullName>16S rRNA m7G1405 methyltransferase</fullName>
    </alternativeName>
    <alternativeName>
        <fullName>Sisomicin-gentamicin resistance methylase Sgm</fullName>
    </alternativeName>
</protein>
<proteinExistence type="evidence at protein level"/>
<organism>
    <name type="scientific">Micromonospora zionensis</name>
    <dbReference type="NCBI Taxonomy" id="1879"/>
    <lineage>
        <taxon>Bacteria</taxon>
        <taxon>Bacillati</taxon>
        <taxon>Actinomycetota</taxon>
        <taxon>Actinomycetes</taxon>
        <taxon>Micromonosporales</taxon>
        <taxon>Micromonosporaceae</taxon>
        <taxon>Micromonospora</taxon>
    </lineage>
</organism>
<feature type="chain" id="PRO_0000416817" description="16S rRNA (guanine(1405)-N(7))-methyltransferase">
    <location>
        <begin position="1"/>
        <end position="274"/>
    </location>
</feature>
<feature type="binding site" evidence="3 6">
    <location>
        <begin position="102"/>
        <end position="108"/>
    </location>
    <ligand>
        <name>S-adenosyl-L-methionine</name>
        <dbReference type="ChEBI" id="CHEBI:59789"/>
    </ligand>
</feature>
<feature type="binding site" evidence="3 6">
    <location>
        <position position="133"/>
    </location>
    <ligand>
        <name>S-adenosyl-L-methionine</name>
        <dbReference type="ChEBI" id="CHEBI:59789"/>
    </ligand>
</feature>
<feature type="binding site" evidence="3 6">
    <location>
        <position position="156"/>
    </location>
    <ligand>
        <name>S-adenosyl-L-methionine</name>
        <dbReference type="ChEBI" id="CHEBI:59789"/>
    </ligand>
</feature>
<feature type="binding site" evidence="3 6">
    <location>
        <begin position="182"/>
        <end position="183"/>
    </location>
    <ligand>
        <name>S-adenosyl-L-methionine</name>
        <dbReference type="ChEBI" id="CHEBI:59789"/>
    </ligand>
</feature>
<feature type="binding site" evidence="3 6">
    <location>
        <position position="198"/>
    </location>
    <ligand>
        <name>S-adenosyl-L-methionine</name>
        <dbReference type="ChEBI" id="CHEBI:59789"/>
    </ligand>
</feature>
<feature type="binding site" evidence="3 6">
    <location>
        <position position="207"/>
    </location>
    <ligand>
        <name>S-adenosyl-L-methionine</name>
        <dbReference type="ChEBI" id="CHEBI:59789"/>
    </ligand>
</feature>
<feature type="mutagenesis site" description="Loss of S-adenosyl-L-methionine binding." evidence="3">
    <original>R</original>
    <variation>A</variation>
    <location>
        <position position="108"/>
    </location>
</feature>
<feature type="mutagenesis site" description="Loss of S-adenosyl-L-methionine binding." evidence="3">
    <original>D</original>
    <variation>A</variation>
    <location>
        <position position="156"/>
    </location>
</feature>
<feature type="mutagenesis site" description="Loss of S-adenosyl-L-methionine binding." evidence="3">
    <original>D</original>
    <variation>A</variation>
    <location>
        <position position="182"/>
    </location>
</feature>
<feature type="helix" evidence="7">
    <location>
        <begin position="9"/>
        <end position="17"/>
    </location>
</feature>
<feature type="turn" evidence="7">
    <location>
        <begin position="20"/>
        <end position="25"/>
    </location>
</feature>
<feature type="helix" evidence="7">
    <location>
        <begin position="28"/>
        <end position="41"/>
    </location>
</feature>
<feature type="turn" evidence="7">
    <location>
        <begin position="42"/>
        <end position="44"/>
    </location>
</feature>
<feature type="helix" evidence="7">
    <location>
        <begin position="46"/>
        <end position="60"/>
    </location>
</feature>
<feature type="helix" evidence="7">
    <location>
        <begin position="62"/>
        <end position="64"/>
    </location>
</feature>
<feature type="helix" evidence="7">
    <location>
        <begin position="72"/>
        <end position="83"/>
    </location>
</feature>
<feature type="turn" evidence="7">
    <location>
        <begin position="84"/>
        <end position="86"/>
    </location>
</feature>
<feature type="helix" evidence="7">
    <location>
        <begin position="88"/>
        <end position="99"/>
    </location>
</feature>
<feature type="helix" evidence="7">
    <location>
        <begin position="103"/>
        <end position="108"/>
    </location>
</feature>
<feature type="helix" evidence="7">
    <location>
        <begin position="109"/>
        <end position="111"/>
    </location>
</feature>
<feature type="helix" evidence="7">
    <location>
        <begin position="112"/>
        <end position="119"/>
    </location>
</feature>
<feature type="helix" evidence="7">
    <location>
        <begin position="120"/>
        <end position="122"/>
    </location>
</feature>
<feature type="strand" evidence="7">
    <location>
        <begin position="127"/>
        <end position="131"/>
    </location>
</feature>
<feature type="helix" evidence="7">
    <location>
        <begin position="137"/>
        <end position="139"/>
    </location>
</feature>
<feature type="turn" evidence="7">
    <location>
        <begin position="142"/>
        <end position="144"/>
    </location>
</feature>
<feature type="strand" evidence="7">
    <location>
        <begin position="151"/>
        <end position="158"/>
    </location>
</feature>
<feature type="helix" evidence="7">
    <location>
        <begin position="159"/>
        <end position="171"/>
    </location>
</feature>
<feature type="strand" evidence="7">
    <location>
        <begin position="176"/>
        <end position="180"/>
    </location>
</feature>
<feature type="turn" evidence="7">
    <location>
        <begin position="183"/>
        <end position="185"/>
    </location>
</feature>
<feature type="strand" evidence="7">
    <location>
        <begin position="193"/>
        <end position="197"/>
    </location>
</feature>
<feature type="helix" evidence="7">
    <location>
        <begin position="201"/>
        <end position="207"/>
    </location>
</feature>
<feature type="helix" evidence="7">
    <location>
        <begin position="211"/>
        <end position="218"/>
    </location>
</feature>
<feature type="strand" evidence="7">
    <location>
        <begin position="222"/>
        <end position="229"/>
    </location>
</feature>
<feature type="helix" evidence="7">
    <location>
        <begin position="240"/>
        <end position="255"/>
    </location>
</feature>
<feature type="strand" evidence="7">
    <location>
        <begin position="258"/>
        <end position="264"/>
    </location>
</feature>
<feature type="strand" evidence="7">
    <location>
        <begin position="267"/>
        <end position="273"/>
    </location>
</feature>
<gene>
    <name type="primary">sgm</name>
</gene>
<evidence type="ECO:0000269" key="1">
    <source>
    </source>
</evidence>
<evidence type="ECO:0000269" key="2">
    <source>
    </source>
</evidence>
<evidence type="ECO:0000269" key="3">
    <source>
    </source>
</evidence>
<evidence type="ECO:0000269" key="4">
    <source>
    </source>
</evidence>
<evidence type="ECO:0000305" key="5"/>
<evidence type="ECO:0007744" key="6">
    <source>
        <dbReference type="PDB" id="3LCU"/>
    </source>
</evidence>
<evidence type="ECO:0007829" key="7">
    <source>
        <dbReference type="PDB" id="3LCV"/>
    </source>
</evidence>
<reference key="1">
    <citation type="journal article" date="1992" name="J. Bacteriol.">
        <title>Cloning and characterization of an aminoglycoside resistance determinant from Micromonospora zionensis.</title>
        <authorList>
            <person name="Kojic M."/>
            <person name="Topisirovic L."/>
            <person name="Vasiljevic B."/>
        </authorList>
    </citation>
    <scope>NUCLEOTIDE SEQUENCE [GENOMIC DNA]</scope>
    <scope>FUNCTION IN ANTIBIOTIC RESISTANCE</scope>
</reference>
<reference key="2">
    <citation type="journal article" date="1996" name="J. Bacteriol.">
        <title>Translational autoregulation of the sgm gene from Micromonospora zionensis.</title>
        <authorList>
            <person name="Kojic M."/>
            <person name="Topisirovic L."/>
            <person name="Vasiljevic B."/>
        </authorList>
    </citation>
    <scope>INDUCTION</scope>
</reference>
<reference key="3">
    <citation type="journal article" date="2009" name="Nucleic Acids Res.">
        <title>Determination of the target nucleosides for members of two families of 16S rRNA methyltransferases that confer resistance to partially overlapping groups of aminoglycoside antibiotics.</title>
        <authorList>
            <person name="Savic M."/>
            <person name="Lovric J."/>
            <person name="Tomic T.I."/>
            <person name="Vasiljevic B."/>
            <person name="Conn G.L."/>
        </authorList>
    </citation>
    <scope>FUNCTION</scope>
    <scope>CATALYTIC ACTIVITY</scope>
</reference>
<reference key="4">
    <citation type="journal article" date="2010" name="Nucleic Acids Res.">
        <title>Structural basis for the methylation of G1405 in 16S rRNA by aminoglycoside resistance methyltransferase Sgm from an antibiotic producer: a diversity of active sites in m7G methyltransferases.</title>
        <authorList>
            <person name="Husain N."/>
            <person name="Tkaczuk K.L."/>
            <person name="Tulsidas S.R."/>
            <person name="Kaminska K.H."/>
            <person name="Cubrilo S."/>
            <person name="Maravic-Vlahovicek G."/>
            <person name="Bujnicki J.M."/>
            <person name="Sivaraman J."/>
        </authorList>
    </citation>
    <scope>X-RAY CRYSTALLOGRAPHY (2.00 ANGSTROMS) IN COMPLEX WITH S-ADENOSYL-L-METHIONINE AND S-ADENOSYL-L-HOMOCYSTEINE</scope>
    <scope>MUTAGENESIS OF ARG-108; ASP-156 AND ASP-182</scope>
</reference>
<dbReference type="EC" id="2.1.1.179"/>
<dbReference type="PIR" id="A45282">
    <property type="entry name" value="A45282"/>
</dbReference>
<dbReference type="RefSeq" id="WP_063978071.1">
    <property type="nucleotide sequence ID" value="NG_050600.1"/>
</dbReference>
<dbReference type="PDB" id="3LCU">
    <property type="method" value="X-ray"/>
    <property type="resolution" value="2.10 A"/>
    <property type="chains" value="A=1-274"/>
</dbReference>
<dbReference type="PDB" id="3LCV">
    <property type="method" value="X-ray"/>
    <property type="resolution" value="2.00 A"/>
    <property type="chains" value="B=1-274"/>
</dbReference>
<dbReference type="PDBsum" id="3LCU"/>
<dbReference type="PDBsum" id="3LCV"/>
<dbReference type="SMR" id="Q7M0R2"/>
<dbReference type="CARD" id="ARO:3000862">
    <property type="molecule name" value="sgm"/>
    <property type="mechanism identifier" value="ARO:0001001"/>
    <property type="mechanism name" value="antibiotic target alteration"/>
</dbReference>
<dbReference type="BRENDA" id="2.1.1.179">
    <property type="organism ID" value="11470"/>
</dbReference>
<dbReference type="EvolutionaryTrace" id="Q7M0R2"/>
<dbReference type="GO" id="GO:0008649">
    <property type="term" value="F:rRNA methyltransferase activity"/>
    <property type="evidence" value="ECO:0007669"/>
    <property type="project" value="InterPro"/>
</dbReference>
<dbReference type="GO" id="GO:0046677">
    <property type="term" value="P:response to antibiotic"/>
    <property type="evidence" value="ECO:0007669"/>
    <property type="project" value="UniProtKB-KW"/>
</dbReference>
<dbReference type="Gene3D" id="1.10.8.10">
    <property type="entry name" value="DNA helicase RuvA subunit, C-terminal domain"/>
    <property type="match status" value="1"/>
</dbReference>
<dbReference type="Gene3D" id="3.40.50.150">
    <property type="entry name" value="Vaccinia Virus protein VP39"/>
    <property type="match status" value="1"/>
</dbReference>
<dbReference type="InterPro" id="IPR025981">
    <property type="entry name" value="rRNA_MeTrfase"/>
</dbReference>
<dbReference type="InterPro" id="IPR010769">
    <property type="entry name" value="rRNA_MeTrfase_GmN_bac"/>
</dbReference>
<dbReference type="InterPro" id="IPR029063">
    <property type="entry name" value="SAM-dependent_MTases_sf"/>
</dbReference>
<dbReference type="NCBIfam" id="NF000466">
    <property type="entry name" value="16S_rRNA_Rmt_gen"/>
    <property type="match status" value="1"/>
</dbReference>
<dbReference type="Pfam" id="PF07091">
    <property type="entry name" value="FmrO"/>
    <property type="match status" value="1"/>
</dbReference>
<dbReference type="PIRSF" id="PIRSF015852">
    <property type="entry name" value="RRNA_mtase_Grm"/>
    <property type="match status" value="1"/>
</dbReference>
<keyword id="KW-0002">3D-structure</keyword>
<keyword id="KW-0046">Antibiotic resistance</keyword>
<keyword id="KW-0489">Methyltransferase</keyword>
<keyword id="KW-0698">rRNA processing</keyword>
<keyword id="KW-0949">S-adenosyl-L-methionine</keyword>
<keyword id="KW-0808">Transferase</keyword>
<comment type="function">
    <text evidence="1 2">Specifically methylates the N(7) position of guanine 1405 in 16S rRNA. Confers resistance to various aminoglycosides, including gentamicin, kanamycin and sisomicin.</text>
</comment>
<comment type="catalytic activity">
    <reaction evidence="2">
        <text>guanosine(1405) in 16S rRNA + S-adenosyl-L-methionine = N(7)-methylguanosine(1405) in 16S rRNA + S-adenosyl-L-homocysteine</text>
        <dbReference type="Rhea" id="RHEA:42772"/>
        <dbReference type="Rhea" id="RHEA-COMP:10225"/>
        <dbReference type="Rhea" id="RHEA-COMP:10226"/>
        <dbReference type="ChEBI" id="CHEBI:57856"/>
        <dbReference type="ChEBI" id="CHEBI:59789"/>
        <dbReference type="ChEBI" id="CHEBI:74269"/>
        <dbReference type="ChEBI" id="CHEBI:74480"/>
        <dbReference type="EC" id="2.1.1.179"/>
    </reaction>
</comment>
<comment type="induction">
    <text evidence="4">Regulates its expression by binding to its own mRNA.</text>
</comment>
<comment type="miscellaneous">
    <text>Protects M.zionensis, which is an antibiotic-producing bacterium, against self-intoxication.</text>
</comment>
<comment type="similarity">
    <text evidence="5">Belongs to the methyltransferase superfamily. Aminoglycoside resistance family.</text>
</comment>